<proteinExistence type="inferred from homology"/>
<comment type="function">
    <text evidence="1">Catalyzes the conversion of uracil and 5-phospho-alpha-D-ribose 1-diphosphate (PRPP) to UMP and diphosphate.</text>
</comment>
<comment type="catalytic activity">
    <reaction evidence="1">
        <text>UMP + diphosphate = 5-phospho-alpha-D-ribose 1-diphosphate + uracil</text>
        <dbReference type="Rhea" id="RHEA:13017"/>
        <dbReference type="ChEBI" id="CHEBI:17568"/>
        <dbReference type="ChEBI" id="CHEBI:33019"/>
        <dbReference type="ChEBI" id="CHEBI:57865"/>
        <dbReference type="ChEBI" id="CHEBI:58017"/>
        <dbReference type="EC" id="2.4.2.9"/>
    </reaction>
</comment>
<comment type="cofactor">
    <cofactor evidence="1">
        <name>Mg(2+)</name>
        <dbReference type="ChEBI" id="CHEBI:18420"/>
    </cofactor>
    <text evidence="1">Binds 1 Mg(2+) ion per subunit. The magnesium is bound as Mg-PRPP.</text>
</comment>
<comment type="activity regulation">
    <text evidence="1">Allosterically activated by GTP.</text>
</comment>
<comment type="pathway">
    <text evidence="1">Pyrimidine metabolism; UMP biosynthesis via salvage pathway; UMP from uracil: step 1/1.</text>
</comment>
<comment type="similarity">
    <text evidence="1">Belongs to the UPRTase family.</text>
</comment>
<protein>
    <recommendedName>
        <fullName evidence="1">Uracil phosphoribosyltransferase</fullName>
        <ecNumber evidence="1">2.4.2.9</ecNumber>
    </recommendedName>
    <alternativeName>
        <fullName evidence="1">UMP pyrophosphorylase</fullName>
    </alternativeName>
    <alternativeName>
        <fullName evidence="1">UPRTase</fullName>
    </alternativeName>
</protein>
<organism>
    <name type="scientific">Escherichia coli O1:K1 / APEC</name>
    <dbReference type="NCBI Taxonomy" id="405955"/>
    <lineage>
        <taxon>Bacteria</taxon>
        <taxon>Pseudomonadati</taxon>
        <taxon>Pseudomonadota</taxon>
        <taxon>Gammaproteobacteria</taxon>
        <taxon>Enterobacterales</taxon>
        <taxon>Enterobacteriaceae</taxon>
        <taxon>Escherichia</taxon>
    </lineage>
</organism>
<keyword id="KW-0021">Allosteric enzyme</keyword>
<keyword id="KW-0328">Glycosyltransferase</keyword>
<keyword id="KW-0342">GTP-binding</keyword>
<keyword id="KW-0460">Magnesium</keyword>
<keyword id="KW-0547">Nucleotide-binding</keyword>
<keyword id="KW-1185">Reference proteome</keyword>
<keyword id="KW-0808">Transferase</keyword>
<dbReference type="EC" id="2.4.2.9" evidence="1"/>
<dbReference type="EMBL" id="CP000468">
    <property type="protein sequence ID" value="ABJ01881.1"/>
    <property type="molecule type" value="Genomic_DNA"/>
</dbReference>
<dbReference type="RefSeq" id="WP_001295473.1">
    <property type="nucleotide sequence ID" value="NZ_CADILS010000040.1"/>
</dbReference>
<dbReference type="SMR" id="A1ADZ1"/>
<dbReference type="GeneID" id="93774638"/>
<dbReference type="KEGG" id="ecv:APECO1_4071"/>
<dbReference type="HOGENOM" id="CLU_067096_2_2_6"/>
<dbReference type="UniPathway" id="UPA00574">
    <property type="reaction ID" value="UER00636"/>
</dbReference>
<dbReference type="Proteomes" id="UP000008216">
    <property type="component" value="Chromosome"/>
</dbReference>
<dbReference type="GO" id="GO:0005525">
    <property type="term" value="F:GTP binding"/>
    <property type="evidence" value="ECO:0007669"/>
    <property type="project" value="UniProtKB-KW"/>
</dbReference>
<dbReference type="GO" id="GO:0000287">
    <property type="term" value="F:magnesium ion binding"/>
    <property type="evidence" value="ECO:0007669"/>
    <property type="project" value="UniProtKB-UniRule"/>
</dbReference>
<dbReference type="GO" id="GO:0004845">
    <property type="term" value="F:uracil phosphoribosyltransferase activity"/>
    <property type="evidence" value="ECO:0007669"/>
    <property type="project" value="UniProtKB-UniRule"/>
</dbReference>
<dbReference type="GO" id="GO:0044206">
    <property type="term" value="P:UMP salvage"/>
    <property type="evidence" value="ECO:0007669"/>
    <property type="project" value="UniProtKB-UniRule"/>
</dbReference>
<dbReference type="GO" id="GO:0006223">
    <property type="term" value="P:uracil salvage"/>
    <property type="evidence" value="ECO:0007669"/>
    <property type="project" value="InterPro"/>
</dbReference>
<dbReference type="CDD" id="cd06223">
    <property type="entry name" value="PRTases_typeI"/>
    <property type="match status" value="1"/>
</dbReference>
<dbReference type="FunFam" id="3.40.50.2020:FF:000003">
    <property type="entry name" value="Uracil phosphoribosyltransferase"/>
    <property type="match status" value="1"/>
</dbReference>
<dbReference type="Gene3D" id="3.40.50.2020">
    <property type="match status" value="1"/>
</dbReference>
<dbReference type="HAMAP" id="MF_01218_B">
    <property type="entry name" value="Upp_B"/>
    <property type="match status" value="1"/>
</dbReference>
<dbReference type="InterPro" id="IPR000836">
    <property type="entry name" value="PRibTrfase_dom"/>
</dbReference>
<dbReference type="InterPro" id="IPR029057">
    <property type="entry name" value="PRTase-like"/>
</dbReference>
<dbReference type="InterPro" id="IPR034332">
    <property type="entry name" value="Upp_B"/>
</dbReference>
<dbReference type="InterPro" id="IPR050054">
    <property type="entry name" value="UPRTase/APRTase"/>
</dbReference>
<dbReference type="InterPro" id="IPR005765">
    <property type="entry name" value="Ura_phspho_trans"/>
</dbReference>
<dbReference type="NCBIfam" id="NF001097">
    <property type="entry name" value="PRK00129.1"/>
    <property type="match status" value="1"/>
</dbReference>
<dbReference type="NCBIfam" id="TIGR01091">
    <property type="entry name" value="upp"/>
    <property type="match status" value="1"/>
</dbReference>
<dbReference type="PANTHER" id="PTHR32315">
    <property type="entry name" value="ADENINE PHOSPHORIBOSYLTRANSFERASE"/>
    <property type="match status" value="1"/>
</dbReference>
<dbReference type="PANTHER" id="PTHR32315:SF4">
    <property type="entry name" value="URACIL PHOSPHORIBOSYLTRANSFERASE, CHLOROPLASTIC"/>
    <property type="match status" value="1"/>
</dbReference>
<dbReference type="Pfam" id="PF14681">
    <property type="entry name" value="UPRTase"/>
    <property type="match status" value="1"/>
</dbReference>
<dbReference type="SUPFAM" id="SSF53271">
    <property type="entry name" value="PRTase-like"/>
    <property type="match status" value="1"/>
</dbReference>
<evidence type="ECO:0000255" key="1">
    <source>
        <dbReference type="HAMAP-Rule" id="MF_01218"/>
    </source>
</evidence>
<name>UPP_ECOK1</name>
<accession>A1ADZ1</accession>
<reference key="1">
    <citation type="journal article" date="2007" name="J. Bacteriol.">
        <title>The genome sequence of avian pathogenic Escherichia coli strain O1:K1:H7 shares strong similarities with human extraintestinal pathogenic E. coli genomes.</title>
        <authorList>
            <person name="Johnson T.J."/>
            <person name="Kariyawasam S."/>
            <person name="Wannemuehler Y."/>
            <person name="Mangiamele P."/>
            <person name="Johnson S.J."/>
            <person name="Doetkott C."/>
            <person name="Skyberg J.A."/>
            <person name="Lynne A.M."/>
            <person name="Johnson J.R."/>
            <person name="Nolan L.K."/>
        </authorList>
    </citation>
    <scope>NUCLEOTIDE SEQUENCE [LARGE SCALE GENOMIC DNA]</scope>
</reference>
<gene>
    <name evidence="1" type="primary">upp</name>
    <name type="ordered locus">Ecok1_23870</name>
    <name type="ORF">APECO1_4071</name>
</gene>
<sequence length="208" mass="22533">MKIVEVKHPLVKHKLGLMREQDISTKRFRELASEVGSLLTYEATADLETEKVTIEGWNGPVEIDQIKGKKITVVPILRAGLGMMDGVLENVPSARISVVGMYRNEETLEPVPYFQKLVSNIDERMALIVDPMLATGGSVIATIDLLKKAGCSSIKVLVLVAAPEGIAALEKAHPDVELYTASIDQGLNEHGYIIPGLGDAGDKIFGTK</sequence>
<feature type="chain" id="PRO_1000053716" description="Uracil phosphoribosyltransferase">
    <location>
        <begin position="1"/>
        <end position="208"/>
    </location>
</feature>
<feature type="binding site" evidence="1">
    <location>
        <position position="78"/>
    </location>
    <ligand>
        <name>5-phospho-alpha-D-ribose 1-diphosphate</name>
        <dbReference type="ChEBI" id="CHEBI:58017"/>
    </ligand>
</feature>
<feature type="binding site" evidence="1">
    <location>
        <position position="103"/>
    </location>
    <ligand>
        <name>5-phospho-alpha-D-ribose 1-diphosphate</name>
        <dbReference type="ChEBI" id="CHEBI:58017"/>
    </ligand>
</feature>
<feature type="binding site" evidence="1">
    <location>
        <begin position="130"/>
        <end position="138"/>
    </location>
    <ligand>
        <name>5-phospho-alpha-D-ribose 1-diphosphate</name>
        <dbReference type="ChEBI" id="CHEBI:58017"/>
    </ligand>
</feature>
<feature type="binding site" evidence="1">
    <location>
        <position position="193"/>
    </location>
    <ligand>
        <name>uracil</name>
        <dbReference type="ChEBI" id="CHEBI:17568"/>
    </ligand>
</feature>
<feature type="binding site" evidence="1">
    <location>
        <begin position="198"/>
        <end position="200"/>
    </location>
    <ligand>
        <name>uracil</name>
        <dbReference type="ChEBI" id="CHEBI:17568"/>
    </ligand>
</feature>
<feature type="binding site" evidence="1">
    <location>
        <position position="199"/>
    </location>
    <ligand>
        <name>5-phospho-alpha-D-ribose 1-diphosphate</name>
        <dbReference type="ChEBI" id="CHEBI:58017"/>
    </ligand>
</feature>